<accession>Q0HE84</accession>
<name>MURC_SHESM</name>
<proteinExistence type="inferred from homology"/>
<keyword id="KW-0067">ATP-binding</keyword>
<keyword id="KW-0131">Cell cycle</keyword>
<keyword id="KW-0132">Cell division</keyword>
<keyword id="KW-0133">Cell shape</keyword>
<keyword id="KW-0961">Cell wall biogenesis/degradation</keyword>
<keyword id="KW-0963">Cytoplasm</keyword>
<keyword id="KW-0436">Ligase</keyword>
<keyword id="KW-0547">Nucleotide-binding</keyword>
<keyword id="KW-0573">Peptidoglycan synthesis</keyword>
<dbReference type="EC" id="6.3.2.8" evidence="1"/>
<dbReference type="EMBL" id="CP000446">
    <property type="protein sequence ID" value="ABI40633.1"/>
    <property type="molecule type" value="Genomic_DNA"/>
</dbReference>
<dbReference type="RefSeq" id="WP_011624296.1">
    <property type="nucleotide sequence ID" value="NC_008321.1"/>
</dbReference>
<dbReference type="SMR" id="Q0HE84"/>
<dbReference type="KEGG" id="she:Shewmr4_3569"/>
<dbReference type="HOGENOM" id="CLU_028104_2_2_6"/>
<dbReference type="UniPathway" id="UPA00219"/>
<dbReference type="GO" id="GO:0005737">
    <property type="term" value="C:cytoplasm"/>
    <property type="evidence" value="ECO:0007669"/>
    <property type="project" value="UniProtKB-SubCell"/>
</dbReference>
<dbReference type="GO" id="GO:0005524">
    <property type="term" value="F:ATP binding"/>
    <property type="evidence" value="ECO:0007669"/>
    <property type="project" value="UniProtKB-UniRule"/>
</dbReference>
<dbReference type="GO" id="GO:0008763">
    <property type="term" value="F:UDP-N-acetylmuramate-L-alanine ligase activity"/>
    <property type="evidence" value="ECO:0007669"/>
    <property type="project" value="UniProtKB-UniRule"/>
</dbReference>
<dbReference type="GO" id="GO:0051301">
    <property type="term" value="P:cell division"/>
    <property type="evidence" value="ECO:0007669"/>
    <property type="project" value="UniProtKB-KW"/>
</dbReference>
<dbReference type="GO" id="GO:0071555">
    <property type="term" value="P:cell wall organization"/>
    <property type="evidence" value="ECO:0007669"/>
    <property type="project" value="UniProtKB-KW"/>
</dbReference>
<dbReference type="GO" id="GO:0009252">
    <property type="term" value="P:peptidoglycan biosynthetic process"/>
    <property type="evidence" value="ECO:0007669"/>
    <property type="project" value="UniProtKB-UniRule"/>
</dbReference>
<dbReference type="GO" id="GO:0008360">
    <property type="term" value="P:regulation of cell shape"/>
    <property type="evidence" value="ECO:0007669"/>
    <property type="project" value="UniProtKB-KW"/>
</dbReference>
<dbReference type="FunFam" id="3.40.1190.10:FF:000001">
    <property type="entry name" value="UDP-N-acetylmuramate--L-alanine ligase"/>
    <property type="match status" value="1"/>
</dbReference>
<dbReference type="FunFam" id="3.40.50.720:FF:000046">
    <property type="entry name" value="UDP-N-acetylmuramate--L-alanine ligase"/>
    <property type="match status" value="1"/>
</dbReference>
<dbReference type="Gene3D" id="3.90.190.20">
    <property type="entry name" value="Mur ligase, C-terminal domain"/>
    <property type="match status" value="1"/>
</dbReference>
<dbReference type="Gene3D" id="3.40.1190.10">
    <property type="entry name" value="Mur-like, catalytic domain"/>
    <property type="match status" value="1"/>
</dbReference>
<dbReference type="Gene3D" id="3.40.50.720">
    <property type="entry name" value="NAD(P)-binding Rossmann-like Domain"/>
    <property type="match status" value="1"/>
</dbReference>
<dbReference type="HAMAP" id="MF_00046">
    <property type="entry name" value="MurC"/>
    <property type="match status" value="1"/>
</dbReference>
<dbReference type="InterPro" id="IPR036565">
    <property type="entry name" value="Mur-like_cat_sf"/>
</dbReference>
<dbReference type="InterPro" id="IPR004101">
    <property type="entry name" value="Mur_ligase_C"/>
</dbReference>
<dbReference type="InterPro" id="IPR036615">
    <property type="entry name" value="Mur_ligase_C_dom_sf"/>
</dbReference>
<dbReference type="InterPro" id="IPR013221">
    <property type="entry name" value="Mur_ligase_cen"/>
</dbReference>
<dbReference type="InterPro" id="IPR000713">
    <property type="entry name" value="Mur_ligase_N"/>
</dbReference>
<dbReference type="InterPro" id="IPR050061">
    <property type="entry name" value="MurCDEF_pg_biosynth"/>
</dbReference>
<dbReference type="InterPro" id="IPR005758">
    <property type="entry name" value="UDP-N-AcMur_Ala_ligase_MurC"/>
</dbReference>
<dbReference type="NCBIfam" id="TIGR01082">
    <property type="entry name" value="murC"/>
    <property type="match status" value="1"/>
</dbReference>
<dbReference type="PANTHER" id="PTHR43445:SF3">
    <property type="entry name" value="UDP-N-ACETYLMURAMATE--L-ALANINE LIGASE"/>
    <property type="match status" value="1"/>
</dbReference>
<dbReference type="PANTHER" id="PTHR43445">
    <property type="entry name" value="UDP-N-ACETYLMURAMATE--L-ALANINE LIGASE-RELATED"/>
    <property type="match status" value="1"/>
</dbReference>
<dbReference type="Pfam" id="PF01225">
    <property type="entry name" value="Mur_ligase"/>
    <property type="match status" value="1"/>
</dbReference>
<dbReference type="Pfam" id="PF02875">
    <property type="entry name" value="Mur_ligase_C"/>
    <property type="match status" value="1"/>
</dbReference>
<dbReference type="Pfam" id="PF08245">
    <property type="entry name" value="Mur_ligase_M"/>
    <property type="match status" value="1"/>
</dbReference>
<dbReference type="SUPFAM" id="SSF51984">
    <property type="entry name" value="MurCD N-terminal domain"/>
    <property type="match status" value="1"/>
</dbReference>
<dbReference type="SUPFAM" id="SSF53623">
    <property type="entry name" value="MurD-like peptide ligases, catalytic domain"/>
    <property type="match status" value="1"/>
</dbReference>
<dbReference type="SUPFAM" id="SSF53244">
    <property type="entry name" value="MurD-like peptide ligases, peptide-binding domain"/>
    <property type="match status" value="1"/>
</dbReference>
<gene>
    <name evidence="1" type="primary">murC</name>
    <name type="ordered locus">Shewmr4_3569</name>
</gene>
<feature type="chain" id="PRO_1000004410" description="UDP-N-acetylmuramate--L-alanine ligase">
    <location>
        <begin position="1"/>
        <end position="488"/>
    </location>
</feature>
<feature type="binding site" evidence="1">
    <location>
        <begin position="127"/>
        <end position="133"/>
    </location>
    <ligand>
        <name>ATP</name>
        <dbReference type="ChEBI" id="CHEBI:30616"/>
    </ligand>
</feature>
<evidence type="ECO:0000255" key="1">
    <source>
        <dbReference type="HAMAP-Rule" id="MF_00046"/>
    </source>
</evidence>
<reference key="1">
    <citation type="submission" date="2006-08" db="EMBL/GenBank/DDBJ databases">
        <title>Complete sequence of Shewanella sp. MR-4.</title>
        <authorList>
            <consortium name="US DOE Joint Genome Institute"/>
            <person name="Copeland A."/>
            <person name="Lucas S."/>
            <person name="Lapidus A."/>
            <person name="Barry K."/>
            <person name="Detter J.C."/>
            <person name="Glavina del Rio T."/>
            <person name="Hammon N."/>
            <person name="Israni S."/>
            <person name="Dalin E."/>
            <person name="Tice H."/>
            <person name="Pitluck S."/>
            <person name="Kiss H."/>
            <person name="Brettin T."/>
            <person name="Bruce D."/>
            <person name="Han C."/>
            <person name="Tapia R."/>
            <person name="Gilna P."/>
            <person name="Schmutz J."/>
            <person name="Larimer F."/>
            <person name="Land M."/>
            <person name="Hauser L."/>
            <person name="Kyrpides N."/>
            <person name="Mikhailova N."/>
            <person name="Nealson K."/>
            <person name="Konstantinidis K."/>
            <person name="Klappenbach J."/>
            <person name="Tiedje J."/>
            <person name="Richardson P."/>
        </authorList>
    </citation>
    <scope>NUCLEOTIDE SEQUENCE [LARGE SCALE GENOMIC DNA]</scope>
    <source>
        <strain>MR-4</strain>
    </source>
</reference>
<organism>
    <name type="scientific">Shewanella sp. (strain MR-4)</name>
    <dbReference type="NCBI Taxonomy" id="60480"/>
    <lineage>
        <taxon>Bacteria</taxon>
        <taxon>Pseudomonadati</taxon>
        <taxon>Pseudomonadota</taxon>
        <taxon>Gammaproteobacteria</taxon>
        <taxon>Alteromonadales</taxon>
        <taxon>Shewanellaceae</taxon>
        <taxon>Shewanella</taxon>
    </lineage>
</organism>
<sequence>MTKTERYLQLRSMIPEMRRIKRIHFVGIGGAGMGGIAEVLVNEGYVVSGSDIAQNAVTDRLCLLGAKIHIGHGADNVQQADVVVVSTAINPENPEIIAAKELRIPIVRRAEMLAELMRYRHGVAIAGTHGKTTTTSLIASLYGQAGRDPTFVIGGLLNSAGTNARLGTSRYLIAEADESDASFLHLQPMVSVVTNIEADHMDTYGGDFEKLKSTFVDFLHNLPFYGVAVVCIDDAVVREIMPRIGRHMITYGFSDDADVQALNFQQQGHQCRFTVRRKGKEDLDLLLNLPGQHNVLNALAAIAVATEDEIDDSAIIQALAEFQGIGRRFQHLGKFATPKGEVMLVDDYGHHPSEVAATIKAARAGWPDKRLVMAYQPHRYTRTRDLYEDFIEVLSQVDCLLLLEVYSAGEAPIPGADGRALCRSIRLRGQLDPIFIASPDQLAEVLPDVLQEGDLLLTQGAGNIGALSRQLAASELGFSTAATTEVKP</sequence>
<protein>
    <recommendedName>
        <fullName evidence="1">UDP-N-acetylmuramate--L-alanine ligase</fullName>
        <ecNumber evidence="1">6.3.2.8</ecNumber>
    </recommendedName>
    <alternativeName>
        <fullName evidence="1">UDP-N-acetylmuramoyl-L-alanine synthetase</fullName>
    </alternativeName>
</protein>
<comment type="function">
    <text evidence="1">Cell wall formation.</text>
</comment>
<comment type="catalytic activity">
    <reaction evidence="1">
        <text>UDP-N-acetyl-alpha-D-muramate + L-alanine + ATP = UDP-N-acetyl-alpha-D-muramoyl-L-alanine + ADP + phosphate + H(+)</text>
        <dbReference type="Rhea" id="RHEA:23372"/>
        <dbReference type="ChEBI" id="CHEBI:15378"/>
        <dbReference type="ChEBI" id="CHEBI:30616"/>
        <dbReference type="ChEBI" id="CHEBI:43474"/>
        <dbReference type="ChEBI" id="CHEBI:57972"/>
        <dbReference type="ChEBI" id="CHEBI:70757"/>
        <dbReference type="ChEBI" id="CHEBI:83898"/>
        <dbReference type="ChEBI" id="CHEBI:456216"/>
        <dbReference type="EC" id="6.3.2.8"/>
    </reaction>
</comment>
<comment type="pathway">
    <text evidence="1">Cell wall biogenesis; peptidoglycan biosynthesis.</text>
</comment>
<comment type="subcellular location">
    <subcellularLocation>
        <location evidence="1">Cytoplasm</location>
    </subcellularLocation>
</comment>
<comment type="similarity">
    <text evidence="1">Belongs to the MurCDEF family.</text>
</comment>